<organism>
    <name type="scientific">Homo sapiens</name>
    <name type="common">Human</name>
    <dbReference type="NCBI Taxonomy" id="9606"/>
    <lineage>
        <taxon>Eukaryota</taxon>
        <taxon>Metazoa</taxon>
        <taxon>Chordata</taxon>
        <taxon>Craniata</taxon>
        <taxon>Vertebrata</taxon>
        <taxon>Euteleostomi</taxon>
        <taxon>Mammalia</taxon>
        <taxon>Eutheria</taxon>
        <taxon>Euarchontoglires</taxon>
        <taxon>Primates</taxon>
        <taxon>Haplorrhini</taxon>
        <taxon>Catarrhini</taxon>
        <taxon>Hominidae</taxon>
        <taxon>Homo</taxon>
    </lineage>
</organism>
<gene>
    <name evidence="13" type="primary">GPR15LG</name>
    <name type="synonym">C10orf99</name>
    <name type="synonym">GPR15L</name>
    <name type="ORF">UNQ1833/PRO3446</name>
</gene>
<sequence length="81" mass="9173">MRLLVLSSLLCILLLCFSIFSTEGKRRPAKAWSGRRTRLCCHRVPSPNSTNLKGHHVRLCKPCKLEPEPRLWVVPGALPQV</sequence>
<name>GP15L_HUMAN</name>
<feature type="signal peptide" evidence="3">
    <location>
        <begin position="1"/>
        <end position="24"/>
    </location>
</feature>
<feature type="chain" id="PRO_0000260084" description="Protein GPR15LG">
    <location>
        <begin position="25"/>
        <end position="81"/>
    </location>
</feature>
<feature type="glycosylation site" description="N-linked (GlcNAc...) asparagine" evidence="2">
    <location>
        <position position="48"/>
    </location>
</feature>
<feature type="disulfide bond" evidence="1">
    <location>
        <begin position="40"/>
        <end position="63"/>
    </location>
</feature>
<feature type="disulfide bond" evidence="1">
    <location>
        <begin position="41"/>
        <end position="60"/>
    </location>
</feature>
<feature type="strand" evidence="14">
    <location>
        <begin position="76"/>
        <end position="78"/>
    </location>
</feature>
<reference key="1">
    <citation type="journal article" date="2003" name="Genome Res.">
        <title>The secreted protein discovery initiative (SPDI), a large-scale effort to identify novel human secreted and transmembrane proteins: a bioinformatics assessment.</title>
        <authorList>
            <person name="Clark H.F."/>
            <person name="Gurney A.L."/>
            <person name="Abaya E."/>
            <person name="Baker K."/>
            <person name="Baldwin D.T."/>
            <person name="Brush J."/>
            <person name="Chen J."/>
            <person name="Chow B."/>
            <person name="Chui C."/>
            <person name="Crowley C."/>
            <person name="Currell B."/>
            <person name="Deuel B."/>
            <person name="Dowd P."/>
            <person name="Eaton D."/>
            <person name="Foster J.S."/>
            <person name="Grimaldi C."/>
            <person name="Gu Q."/>
            <person name="Hass P.E."/>
            <person name="Heldens S."/>
            <person name="Huang A."/>
            <person name="Kim H.S."/>
            <person name="Klimowski L."/>
            <person name="Jin Y."/>
            <person name="Johnson S."/>
            <person name="Lee J."/>
            <person name="Lewis L."/>
            <person name="Liao D."/>
            <person name="Mark M.R."/>
            <person name="Robbie E."/>
            <person name="Sanchez C."/>
            <person name="Schoenfeld J."/>
            <person name="Seshagiri S."/>
            <person name="Simmons L."/>
            <person name="Singh J."/>
            <person name="Smith V."/>
            <person name="Stinson J."/>
            <person name="Vagts A."/>
            <person name="Vandlen R.L."/>
            <person name="Watanabe C."/>
            <person name="Wieand D."/>
            <person name="Woods K."/>
            <person name="Xie M.-H."/>
            <person name="Yansura D.G."/>
            <person name="Yi S."/>
            <person name="Yu G."/>
            <person name="Yuan J."/>
            <person name="Zhang M."/>
            <person name="Zhang Z."/>
            <person name="Goddard A.D."/>
            <person name="Wood W.I."/>
            <person name="Godowski P.J."/>
            <person name="Gray A.M."/>
        </authorList>
    </citation>
    <scope>NUCLEOTIDE SEQUENCE [LARGE SCALE MRNA]</scope>
</reference>
<reference key="2">
    <citation type="journal article" date="2004" name="Nature">
        <title>The DNA sequence and comparative analysis of human chromosome 10.</title>
        <authorList>
            <person name="Deloukas P."/>
            <person name="Earthrowl M.E."/>
            <person name="Grafham D.V."/>
            <person name="Rubenfield M."/>
            <person name="French L."/>
            <person name="Steward C.A."/>
            <person name="Sims S.K."/>
            <person name="Jones M.C."/>
            <person name="Searle S."/>
            <person name="Scott C."/>
            <person name="Howe K."/>
            <person name="Hunt S.E."/>
            <person name="Andrews T.D."/>
            <person name="Gilbert J.G.R."/>
            <person name="Swarbreck D."/>
            <person name="Ashurst J.L."/>
            <person name="Taylor A."/>
            <person name="Battles J."/>
            <person name="Bird C.P."/>
            <person name="Ainscough R."/>
            <person name="Almeida J.P."/>
            <person name="Ashwell R.I.S."/>
            <person name="Ambrose K.D."/>
            <person name="Babbage A.K."/>
            <person name="Bagguley C.L."/>
            <person name="Bailey J."/>
            <person name="Banerjee R."/>
            <person name="Bates K."/>
            <person name="Beasley H."/>
            <person name="Bray-Allen S."/>
            <person name="Brown A.J."/>
            <person name="Brown J.Y."/>
            <person name="Burford D.C."/>
            <person name="Burrill W."/>
            <person name="Burton J."/>
            <person name="Cahill P."/>
            <person name="Camire D."/>
            <person name="Carter N.P."/>
            <person name="Chapman J.C."/>
            <person name="Clark S.Y."/>
            <person name="Clarke G."/>
            <person name="Clee C.M."/>
            <person name="Clegg S."/>
            <person name="Corby N."/>
            <person name="Coulson A."/>
            <person name="Dhami P."/>
            <person name="Dutta I."/>
            <person name="Dunn M."/>
            <person name="Faulkner L."/>
            <person name="Frankish A."/>
            <person name="Frankland J.A."/>
            <person name="Garner P."/>
            <person name="Garnett J."/>
            <person name="Gribble S."/>
            <person name="Griffiths C."/>
            <person name="Grocock R."/>
            <person name="Gustafson E."/>
            <person name="Hammond S."/>
            <person name="Harley J.L."/>
            <person name="Hart E."/>
            <person name="Heath P.D."/>
            <person name="Ho T.P."/>
            <person name="Hopkins B."/>
            <person name="Horne J."/>
            <person name="Howden P.J."/>
            <person name="Huckle E."/>
            <person name="Hynds C."/>
            <person name="Johnson C."/>
            <person name="Johnson D."/>
            <person name="Kana A."/>
            <person name="Kay M."/>
            <person name="Kimberley A.M."/>
            <person name="Kershaw J.K."/>
            <person name="Kokkinaki M."/>
            <person name="Laird G.K."/>
            <person name="Lawlor S."/>
            <person name="Lee H.M."/>
            <person name="Leongamornlert D.A."/>
            <person name="Laird G."/>
            <person name="Lloyd C."/>
            <person name="Lloyd D.M."/>
            <person name="Loveland J."/>
            <person name="Lovell J."/>
            <person name="McLaren S."/>
            <person name="McLay K.E."/>
            <person name="McMurray A."/>
            <person name="Mashreghi-Mohammadi M."/>
            <person name="Matthews L."/>
            <person name="Milne S."/>
            <person name="Nickerson T."/>
            <person name="Nguyen M."/>
            <person name="Overton-Larty E."/>
            <person name="Palmer S.A."/>
            <person name="Pearce A.V."/>
            <person name="Peck A.I."/>
            <person name="Pelan S."/>
            <person name="Phillimore B."/>
            <person name="Porter K."/>
            <person name="Rice C.M."/>
            <person name="Rogosin A."/>
            <person name="Ross M.T."/>
            <person name="Sarafidou T."/>
            <person name="Sehra H.K."/>
            <person name="Shownkeen R."/>
            <person name="Skuce C.D."/>
            <person name="Smith M."/>
            <person name="Standring L."/>
            <person name="Sycamore N."/>
            <person name="Tester J."/>
            <person name="Thorpe A."/>
            <person name="Torcasso W."/>
            <person name="Tracey A."/>
            <person name="Tromans A."/>
            <person name="Tsolas J."/>
            <person name="Wall M."/>
            <person name="Walsh J."/>
            <person name="Wang H."/>
            <person name="Weinstock K."/>
            <person name="West A.P."/>
            <person name="Willey D.L."/>
            <person name="Whitehead S.L."/>
            <person name="Wilming L."/>
            <person name="Wray P.W."/>
            <person name="Young L."/>
            <person name="Chen Y."/>
            <person name="Lovering R.C."/>
            <person name="Moschonas N.K."/>
            <person name="Siebert R."/>
            <person name="Fechtel K."/>
            <person name="Bentley D."/>
            <person name="Durbin R.M."/>
            <person name="Hubbard T."/>
            <person name="Doucette-Stamm L."/>
            <person name="Beck S."/>
            <person name="Smith D.R."/>
            <person name="Rogers J."/>
        </authorList>
    </citation>
    <scope>NUCLEOTIDE SEQUENCE [LARGE SCALE GENOMIC DNA]</scope>
</reference>
<reference key="3">
    <citation type="journal article" date="2014" name="Sci. Rep.">
        <title>CSBF/C10orf99, a novel potential cytokine, inhibits colon cancer cell growth through inducing G1 arrest.</title>
        <authorList>
            <person name="Pan W."/>
            <person name="Cheng Y."/>
            <person name="Zhang H."/>
            <person name="Liu B."/>
            <person name="Mo X."/>
            <person name="Li T."/>
            <person name="Li L."/>
            <person name="Cheng X."/>
            <person name="Zhang L."/>
            <person name="Ji J."/>
            <person name="Wang P."/>
            <person name="Han W."/>
        </authorList>
    </citation>
    <scope>PROTEIN SEQUENCE OF 25-34</scope>
    <scope>FUNCTION</scope>
    <scope>SUBCELLULAR LOCATION</scope>
    <scope>TISSUE SPECIFICITY</scope>
    <scope>INTERACTION WITH SUSD2</scope>
</reference>
<reference key="4">
    <citation type="journal article" date="2015" name="Biochem. Biophys. Res. Commun.">
        <title>AP-57/C10orf99 is a new type of multifunctional antimicrobial peptide.</title>
        <authorList>
            <person name="Yang M."/>
            <person name="Tang M."/>
            <person name="Ma X."/>
            <person name="Yang L."/>
            <person name="He J."/>
            <person name="Peng X."/>
            <person name="Guo G."/>
            <person name="Zhou L."/>
            <person name="Luo N."/>
            <person name="Yuan Z."/>
            <person name="Tong A."/>
        </authorList>
    </citation>
    <scope>PROTEIN SEQUENCE OF 44-58</scope>
    <scope>FUNCTION</scope>
    <scope>SUBCELLULAR LOCATION</scope>
    <scope>TISSUE SPECIFICITY</scope>
    <scope>DISULFIDE BOND</scope>
</reference>
<reference key="5">
    <citation type="journal article" date="2017" name="Front. Immunol.">
        <title>A mucosal and cutaneous chemokine ligand for the lymphocyte chemoattractant receptor GPR15.</title>
        <authorList>
            <person name="Ocon B."/>
            <person name="Pan J."/>
            <person name="Dinh T.T."/>
            <person name="Chen W."/>
            <person name="Ballet R."/>
            <person name="Bscheider M."/>
            <person name="Habtezion A."/>
            <person name="Tu H."/>
            <person name="Zabel B.A."/>
            <person name="Butcher E.C."/>
        </authorList>
    </citation>
    <scope>FUNCTION</scope>
    <scope>RECEPTOR BINDING</scope>
</reference>
<reference key="6">
    <citation type="journal article" date="2017" name="Sci. Signal.">
        <title>A natural ligand for the orphan receptor GPR15 modulates lymphocyte recruitment to epithelia.</title>
        <authorList>
            <person name="Suply T."/>
            <person name="Hannedouche S."/>
            <person name="Carte N."/>
            <person name="Li J."/>
            <person name="Grosshans B."/>
            <person name="Schaefer M."/>
            <person name="Raad L."/>
            <person name="Beck V."/>
            <person name="Vidal S."/>
            <person name="Hiou-Feige A."/>
            <person name="Beluch N."/>
            <person name="Barbieri S."/>
            <person name="Wirsching J."/>
            <person name="Lageyre N."/>
            <person name="Hillger F."/>
            <person name="Debon C."/>
            <person name="Dawson J."/>
            <person name="Smith P."/>
            <person name="Lannoy V."/>
            <person name="Detheux M."/>
            <person name="Bitsch F."/>
            <person name="Falchetto R."/>
            <person name="Bouwmeester T."/>
            <person name="Porter J."/>
            <person name="Baumgarten B."/>
            <person name="Mansfield K."/>
            <person name="Carballido J.M."/>
            <person name="Seuwen K."/>
            <person name="Bassilana F."/>
        </authorList>
    </citation>
    <scope>TISSUE SPECIFICITY</scope>
    <scope>FUNCTION</scope>
</reference>
<reference key="7">
    <citation type="journal article" date="2018" name="Sci. Rep.">
        <title>C10orf99 contributes to the development of psoriasis by promoting the proliferation of keratinocytes.</title>
        <authorList>
            <person name="Chen C."/>
            <person name="Wu N."/>
            <person name="Duan Q."/>
            <person name="Yang H."/>
            <person name="Wang X."/>
            <person name="Yang P."/>
            <person name="Zhang M."/>
            <person name="Liu J."/>
            <person name="Liu Z."/>
            <person name="Shao Y."/>
            <person name="Zheng Y."/>
        </authorList>
    </citation>
    <scope>INDUCTION</scope>
    <scope>FUNCTION</scope>
</reference>
<reference key="8">
    <citation type="journal article" date="2022" name="Sci. Adv.">
        <title>GPR15L is an epithelial inflammation-derived pruritogen.</title>
        <authorList>
            <person name="Tseng P.Y."/>
            <person name="Hoon M.A."/>
        </authorList>
    </citation>
    <scope>INDUCTION</scope>
    <scope>FUNCTION</scope>
</reference>
<comment type="function">
    <text evidence="3 5 6 7 8">Highly cationic protein that has multiple functions. Acts as a chemotactic factor that mediates lymphocytes recruitment to epithelia through binding and activation of the G-protein coupled receptor GPR15 (PubMed:28900043, PubMed:28936214). May be a tumor suppressor; together with SUSD2 has a growth inhibitory effect on colon cancer cells which includes G1 cell cycle arrest (PubMed:25351403). May regulate keratinocyte proliferation (PubMed:29872130). In addition, through activation of Mas-related G protein-coupled receptors (MRGPRs) contributes to pruritogenesis by activating itch-selective sensory neurons and mast cells degranulation (PubMed:35704588).</text>
</comment>
<comment type="function">
    <text evidence="4">Has antimicrobial activity against Gram-positive bacteria, including Staphylococcus aureus and Actinomyces spec., and Mycoplasma hominis and lentivirus (PubMed:25585381).</text>
</comment>
<comment type="subunit">
    <text evidence="3">Interacts with SUSD2; the interaction is direct.</text>
</comment>
<comment type="subcellular location">
    <subcellularLocation>
        <location evidence="3 4">Secreted</location>
    </subcellularLocation>
</comment>
<comment type="tissue specificity">
    <text evidence="4 5 8">Expressed at high levels in colon, and cervix and at moderate level in tonsil (PubMed:25585381, PubMed:28900043). Highly reduced expression in primary colon cancer tissues compared with that in adjacent tissues (PubMed:25351403). Highest levels of expression detected in stomach and colon; expressed in epithelium of skin and esophagus, and in some tumor and/or tumor adjacent tissues (TAT), including TAT of esophagus cancer, hepatocellular carcinoma (HCC), squamous cell carcinoma (SCC), basal cell carcinoma (BCC) and invasive ductal carcinoma (IDC) tissues (at protein level) (PubMed:25585381). Highly expressed by inflammatory differentiated keratinocytese (PubMed:35704588).</text>
</comment>
<comment type="induction">
    <text evidence="7 8">Up-regulated in the skin of psoriasis and atopic dermatitis patients.</text>
</comment>
<accession>Q6UWK7</accession>
<keyword id="KW-0002">3D-structure</keyword>
<keyword id="KW-0044">Antibiotic</keyword>
<keyword id="KW-0929">Antimicrobial</keyword>
<keyword id="KW-0145">Chemotaxis</keyword>
<keyword id="KW-0202">Cytokine</keyword>
<keyword id="KW-0903">Direct protein sequencing</keyword>
<keyword id="KW-1015">Disulfide bond</keyword>
<keyword id="KW-0325">Glycoprotein</keyword>
<keyword id="KW-1267">Proteomics identification</keyword>
<keyword id="KW-1185">Reference proteome</keyword>
<keyword id="KW-0964">Secreted</keyword>
<keyword id="KW-0732">Signal</keyword>
<keyword id="KW-0043">Tumor suppressor</keyword>
<evidence type="ECO:0000250" key="1">
    <source>
        <dbReference type="UniProtKB" id="I3LGZ3"/>
    </source>
</evidence>
<evidence type="ECO:0000255" key="2"/>
<evidence type="ECO:0000269" key="3">
    <source>
    </source>
</evidence>
<evidence type="ECO:0000269" key="4">
    <source>
    </source>
</evidence>
<evidence type="ECO:0000269" key="5">
    <source>
    </source>
</evidence>
<evidence type="ECO:0000269" key="6">
    <source>
    </source>
</evidence>
<evidence type="ECO:0000269" key="7">
    <source>
    </source>
</evidence>
<evidence type="ECO:0000269" key="8">
    <source>
    </source>
</evidence>
<evidence type="ECO:0000303" key="9">
    <source>
    </source>
</evidence>
<evidence type="ECO:0000303" key="10">
    <source>
    </source>
</evidence>
<evidence type="ECO:0000303" key="11">
    <source>
    </source>
</evidence>
<evidence type="ECO:0000305" key="12"/>
<evidence type="ECO:0000312" key="13">
    <source>
        <dbReference type="HGNC" id="HGNC:31428"/>
    </source>
</evidence>
<evidence type="ECO:0007829" key="14">
    <source>
        <dbReference type="PDB" id="8ZQE"/>
    </source>
</evidence>
<proteinExistence type="evidence at protein level"/>
<protein>
    <recommendedName>
        <fullName evidence="12">Protein GPR15LG</fullName>
    </recommendedName>
    <alternativeName>
        <fullName evidence="10">Antimicrobial peptide with 57 amino acid residues</fullName>
        <shortName evidence="10">AP-57</shortName>
        <shortName evidence="10">Antimicrobial peptide-57</shortName>
    </alternativeName>
    <alternativeName>
        <fullName evidence="9">Colon-derived SUSD2 binding factor</fullName>
        <shortName evidence="9">CSBF</shortName>
    </alternativeName>
    <alternativeName>
        <fullName evidence="13">Protein GPR15 ligand</fullName>
    </alternativeName>
    <alternativeName>
        <fullName evidence="11">Protein GPR15L</fullName>
    </alternativeName>
    <alternativeName>
        <fullName>Secreted protein C10orf99</fullName>
    </alternativeName>
</protein>
<dbReference type="EMBL" id="AY358751">
    <property type="protein sequence ID" value="AAQ89111.1"/>
    <property type="molecule type" value="mRNA"/>
</dbReference>
<dbReference type="EMBL" id="AC022389">
    <property type="status" value="NOT_ANNOTATED_CDS"/>
    <property type="molecule type" value="Genomic_DNA"/>
</dbReference>
<dbReference type="CCDS" id="CCDS7371.1"/>
<dbReference type="RefSeq" id="NP_997256.1">
    <property type="nucleotide sequence ID" value="NM_207373.3"/>
</dbReference>
<dbReference type="PDB" id="8ZQE">
    <property type="method" value="EM"/>
    <property type="resolution" value="2.90 A"/>
    <property type="chains" value="L=72-81"/>
</dbReference>
<dbReference type="PDBsum" id="8ZQE"/>
<dbReference type="EMDB" id="EMD-60384"/>
<dbReference type="SMR" id="Q6UWK7"/>
<dbReference type="FunCoup" id="Q6UWK7">
    <property type="interactions" value="67"/>
</dbReference>
<dbReference type="STRING" id="9606.ENSP00000361199"/>
<dbReference type="GlyCosmos" id="Q6UWK7">
    <property type="glycosylation" value="1 site, No reported glycans"/>
</dbReference>
<dbReference type="GlyGen" id="Q6UWK7">
    <property type="glycosylation" value="1 site"/>
</dbReference>
<dbReference type="iPTMnet" id="Q6UWK7"/>
<dbReference type="PhosphoSitePlus" id="Q6UWK7"/>
<dbReference type="BioMuta" id="C10orf99"/>
<dbReference type="DMDM" id="74749393"/>
<dbReference type="PaxDb" id="9606-ENSP00000361199"/>
<dbReference type="PeptideAtlas" id="Q6UWK7"/>
<dbReference type="ProteomicsDB" id="67489"/>
<dbReference type="Antibodypedia" id="62671">
    <property type="antibodies" value="8 antibodies from 7 providers"/>
</dbReference>
<dbReference type="DNASU" id="387695"/>
<dbReference type="Ensembl" id="ENST00000372126.4">
    <property type="protein sequence ID" value="ENSP00000361199.3"/>
    <property type="gene ID" value="ENSG00000188373.5"/>
</dbReference>
<dbReference type="GeneID" id="387695"/>
<dbReference type="KEGG" id="hsa:387695"/>
<dbReference type="MANE-Select" id="ENST00000372126.4">
    <property type="protein sequence ID" value="ENSP00000361199.3"/>
    <property type="RefSeq nucleotide sequence ID" value="NM_207373.3"/>
    <property type="RefSeq protein sequence ID" value="NP_997256.1"/>
</dbReference>
<dbReference type="UCSC" id="uc001kcu.4">
    <property type="organism name" value="human"/>
</dbReference>
<dbReference type="AGR" id="HGNC:31428"/>
<dbReference type="CTD" id="387695"/>
<dbReference type="DisGeNET" id="387695"/>
<dbReference type="GeneCards" id="GPR15LG"/>
<dbReference type="HGNC" id="HGNC:31428">
    <property type="gene designation" value="GPR15LG"/>
</dbReference>
<dbReference type="HPA" id="ENSG00000188373">
    <property type="expression patterns" value="Group enriched (esophagus, intestine, vagina)"/>
</dbReference>
<dbReference type="MIM" id="617775">
    <property type="type" value="gene"/>
</dbReference>
<dbReference type="neXtProt" id="NX_Q6UWK7"/>
<dbReference type="OpenTargets" id="ENSG00000188373"/>
<dbReference type="PharmGKB" id="PA134990747"/>
<dbReference type="VEuPathDB" id="HostDB:ENSG00000188373"/>
<dbReference type="eggNOG" id="ENOG502TD47">
    <property type="taxonomic scope" value="Eukaryota"/>
</dbReference>
<dbReference type="GeneTree" id="ENSGT00390000015172"/>
<dbReference type="HOGENOM" id="CLU_195436_0_0_1"/>
<dbReference type="InParanoid" id="Q6UWK7"/>
<dbReference type="OMA" id="RARLCCH"/>
<dbReference type="OrthoDB" id="9627112at2759"/>
<dbReference type="PAN-GO" id="Q6UWK7">
    <property type="GO annotations" value="2 GO annotations based on evolutionary models"/>
</dbReference>
<dbReference type="PhylomeDB" id="Q6UWK7"/>
<dbReference type="TreeFam" id="TF336385"/>
<dbReference type="PathwayCommons" id="Q6UWK7"/>
<dbReference type="SignaLink" id="Q6UWK7"/>
<dbReference type="BioGRID-ORCS" id="387695">
    <property type="hits" value="9 hits in 1134 CRISPR screens"/>
</dbReference>
<dbReference type="ChiTaRS" id="C10orf99">
    <property type="organism name" value="human"/>
</dbReference>
<dbReference type="GenomeRNAi" id="387695"/>
<dbReference type="Pharos" id="Q6UWK7">
    <property type="development level" value="Tbio"/>
</dbReference>
<dbReference type="PRO" id="PR:Q6UWK7"/>
<dbReference type="Proteomes" id="UP000005640">
    <property type="component" value="Chromosome 10"/>
</dbReference>
<dbReference type="RNAct" id="Q6UWK7">
    <property type="molecule type" value="protein"/>
</dbReference>
<dbReference type="Bgee" id="ENSG00000188373">
    <property type="expression patterns" value="Expressed in gingival epithelium and 110 other cell types or tissues"/>
</dbReference>
<dbReference type="GO" id="GO:0005576">
    <property type="term" value="C:extracellular region"/>
    <property type="evidence" value="ECO:0000314"/>
    <property type="project" value="UniProtKB"/>
</dbReference>
<dbReference type="GO" id="GO:0005615">
    <property type="term" value="C:extracellular space"/>
    <property type="evidence" value="ECO:0007669"/>
    <property type="project" value="UniProtKB-KW"/>
</dbReference>
<dbReference type="GO" id="GO:0008009">
    <property type="term" value="F:chemokine activity"/>
    <property type="evidence" value="ECO:0000314"/>
    <property type="project" value="UniProtKB"/>
</dbReference>
<dbReference type="GO" id="GO:0001664">
    <property type="term" value="F:G protein-coupled receptor binding"/>
    <property type="evidence" value="ECO:0000314"/>
    <property type="project" value="UniProtKB"/>
</dbReference>
<dbReference type="GO" id="GO:0048018">
    <property type="term" value="F:receptor ligand activity"/>
    <property type="evidence" value="ECO:0000314"/>
    <property type="project" value="UniProtKB"/>
</dbReference>
<dbReference type="GO" id="GO:0050832">
    <property type="term" value="P:defense response to fungus"/>
    <property type="evidence" value="ECO:0000314"/>
    <property type="project" value="UniProtKB"/>
</dbReference>
<dbReference type="GO" id="GO:0050830">
    <property type="term" value="P:defense response to Gram-positive bacterium"/>
    <property type="evidence" value="ECO:0000314"/>
    <property type="project" value="UniProtKB"/>
</dbReference>
<dbReference type="GO" id="GO:0007186">
    <property type="term" value="P:G protein-coupled receptor signaling pathway"/>
    <property type="evidence" value="ECO:0000314"/>
    <property type="project" value="UniProtKB"/>
</dbReference>
<dbReference type="GO" id="GO:0048247">
    <property type="term" value="P:lymphocyte chemotaxis"/>
    <property type="evidence" value="ECO:0000314"/>
    <property type="project" value="UniProtKB"/>
</dbReference>
<dbReference type="GO" id="GO:0043303">
    <property type="term" value="P:mast cell degranulation"/>
    <property type="evidence" value="ECO:0000315"/>
    <property type="project" value="UniProtKB"/>
</dbReference>
<dbReference type="GO" id="GO:1902807">
    <property type="term" value="P:negative regulation of cell cycle G1/S phase transition"/>
    <property type="evidence" value="ECO:0000314"/>
    <property type="project" value="UniProtKB"/>
</dbReference>
<dbReference type="GO" id="GO:0051782">
    <property type="term" value="P:negative regulation of cell division"/>
    <property type="evidence" value="ECO:0000314"/>
    <property type="project" value="UniProtKB"/>
</dbReference>
<dbReference type="GO" id="GO:0010837">
    <property type="term" value="P:regulation of keratinocyte proliferation"/>
    <property type="evidence" value="ECO:0000315"/>
    <property type="project" value="UniProtKB"/>
</dbReference>
<dbReference type="GO" id="GO:2000404">
    <property type="term" value="P:regulation of T cell migration"/>
    <property type="evidence" value="ECO:0000314"/>
    <property type="project" value="UniProtKB"/>
</dbReference>
<dbReference type="GO" id="GO:0043029">
    <property type="term" value="P:T cell homeostasis"/>
    <property type="evidence" value="ECO:0000314"/>
    <property type="project" value="UniProtKB"/>
</dbReference>
<dbReference type="InterPro" id="IPR031713">
    <property type="entry name" value="GPR15L"/>
</dbReference>
<dbReference type="Pfam" id="PF15854">
    <property type="entry name" value="GPR15L"/>
    <property type="match status" value="1"/>
</dbReference>